<accession>P0A732</accession>
<accession>P37066</accession>
<accession>P75872</accession>
<accession>Q8XD91</accession>
<accession>Q9R7Q3</accession>
<proteinExistence type="inferred from homology"/>
<organism>
    <name type="scientific">Escherichia coli O157:H7</name>
    <dbReference type="NCBI Taxonomy" id="83334"/>
    <lineage>
        <taxon>Bacteria</taxon>
        <taxon>Pseudomonadati</taxon>
        <taxon>Pseudomonadota</taxon>
        <taxon>Gammaproteobacteria</taxon>
        <taxon>Enterobacterales</taxon>
        <taxon>Enterobacteriaceae</taxon>
        <taxon>Escherichia</taxon>
    </lineage>
</organism>
<protein>
    <recommendedName>
        <fullName evidence="1">Methylglyoxal synthase</fullName>
        <shortName evidence="1">MGS</shortName>
        <ecNumber evidence="1">4.2.3.3</ecNumber>
    </recommendedName>
</protein>
<comment type="function">
    <text evidence="1">Catalyzes the formation of methylglyoxal from dihydroxyacetone phosphate.</text>
</comment>
<comment type="catalytic activity">
    <reaction evidence="1">
        <text>dihydroxyacetone phosphate = methylglyoxal + phosphate</text>
        <dbReference type="Rhea" id="RHEA:17937"/>
        <dbReference type="ChEBI" id="CHEBI:17158"/>
        <dbReference type="ChEBI" id="CHEBI:43474"/>
        <dbReference type="ChEBI" id="CHEBI:57642"/>
        <dbReference type="EC" id="4.2.3.3"/>
    </reaction>
</comment>
<comment type="similarity">
    <text evidence="1 2">Belongs to the methylglyoxal synthase family.</text>
</comment>
<comment type="sequence caution" evidence="2">
    <conflict type="erroneous initiation">
        <sequence resource="EMBL-CDS" id="AAG55449"/>
    </conflict>
</comment>
<comment type="sequence caution" evidence="2">
    <conflict type="erroneous initiation">
        <sequence resource="EMBL-CDS" id="BAB34470"/>
    </conflict>
</comment>
<dbReference type="EC" id="4.2.3.3" evidence="1"/>
<dbReference type="EMBL" id="AE005174">
    <property type="protein sequence ID" value="AAG55449.1"/>
    <property type="status" value="ALT_INIT"/>
    <property type="molecule type" value="Genomic_DNA"/>
</dbReference>
<dbReference type="EMBL" id="BA000007">
    <property type="protein sequence ID" value="BAB34470.1"/>
    <property type="status" value="ALT_INIT"/>
    <property type="molecule type" value="Genomic_DNA"/>
</dbReference>
<dbReference type="RefSeq" id="NP_309074.2">
    <property type="nucleotide sequence ID" value="NC_002695.1"/>
</dbReference>
<dbReference type="RefSeq" id="WP_000424181.1">
    <property type="nucleotide sequence ID" value="NZ_VOAI01000006.1"/>
</dbReference>
<dbReference type="SMR" id="P0A732"/>
<dbReference type="STRING" id="155864.Z1314"/>
<dbReference type="GeneID" id="915175"/>
<dbReference type="GeneID" id="93776451"/>
<dbReference type="KEGG" id="ece:Z1314"/>
<dbReference type="KEGG" id="ecs:ECs_1047"/>
<dbReference type="PATRIC" id="fig|386585.9.peg.1171"/>
<dbReference type="eggNOG" id="COG1803">
    <property type="taxonomic scope" value="Bacteria"/>
</dbReference>
<dbReference type="HOGENOM" id="CLU_120420_0_1_6"/>
<dbReference type="OMA" id="RICDVHN"/>
<dbReference type="Proteomes" id="UP000000558">
    <property type="component" value="Chromosome"/>
</dbReference>
<dbReference type="Proteomes" id="UP000002519">
    <property type="component" value="Chromosome"/>
</dbReference>
<dbReference type="GO" id="GO:0005829">
    <property type="term" value="C:cytosol"/>
    <property type="evidence" value="ECO:0007669"/>
    <property type="project" value="TreeGrafter"/>
</dbReference>
<dbReference type="GO" id="GO:0008929">
    <property type="term" value="F:methylglyoxal synthase activity"/>
    <property type="evidence" value="ECO:0007669"/>
    <property type="project" value="UniProtKB-UniRule"/>
</dbReference>
<dbReference type="GO" id="GO:0019242">
    <property type="term" value="P:methylglyoxal biosynthetic process"/>
    <property type="evidence" value="ECO:0007669"/>
    <property type="project" value="UniProtKB-UniRule"/>
</dbReference>
<dbReference type="CDD" id="cd01422">
    <property type="entry name" value="MGS"/>
    <property type="match status" value="1"/>
</dbReference>
<dbReference type="FunFam" id="3.40.50.1380:FF:000002">
    <property type="entry name" value="Methylglyoxal synthase"/>
    <property type="match status" value="1"/>
</dbReference>
<dbReference type="Gene3D" id="3.40.50.1380">
    <property type="entry name" value="Methylglyoxal synthase-like domain"/>
    <property type="match status" value="1"/>
</dbReference>
<dbReference type="HAMAP" id="MF_00549">
    <property type="entry name" value="Methylglyoxal_synth"/>
    <property type="match status" value="1"/>
</dbReference>
<dbReference type="InterPro" id="IPR004363">
    <property type="entry name" value="Methylgl_synth"/>
</dbReference>
<dbReference type="InterPro" id="IPR018148">
    <property type="entry name" value="Methylglyoxal_synth_AS"/>
</dbReference>
<dbReference type="InterPro" id="IPR011607">
    <property type="entry name" value="MGS-like_dom"/>
</dbReference>
<dbReference type="InterPro" id="IPR036914">
    <property type="entry name" value="MGS-like_dom_sf"/>
</dbReference>
<dbReference type="NCBIfam" id="TIGR00160">
    <property type="entry name" value="MGSA"/>
    <property type="match status" value="1"/>
</dbReference>
<dbReference type="NCBIfam" id="NF003559">
    <property type="entry name" value="PRK05234.1"/>
    <property type="match status" value="1"/>
</dbReference>
<dbReference type="PANTHER" id="PTHR30492">
    <property type="entry name" value="METHYLGLYOXAL SYNTHASE"/>
    <property type="match status" value="1"/>
</dbReference>
<dbReference type="PANTHER" id="PTHR30492:SF0">
    <property type="entry name" value="METHYLGLYOXAL SYNTHASE"/>
    <property type="match status" value="1"/>
</dbReference>
<dbReference type="Pfam" id="PF02142">
    <property type="entry name" value="MGS"/>
    <property type="match status" value="1"/>
</dbReference>
<dbReference type="PIRSF" id="PIRSF006614">
    <property type="entry name" value="Methylglyox_syn"/>
    <property type="match status" value="1"/>
</dbReference>
<dbReference type="SMART" id="SM00851">
    <property type="entry name" value="MGS"/>
    <property type="match status" value="1"/>
</dbReference>
<dbReference type="SUPFAM" id="SSF52335">
    <property type="entry name" value="Methylglyoxal synthase-like"/>
    <property type="match status" value="1"/>
</dbReference>
<dbReference type="PROSITE" id="PS01335">
    <property type="entry name" value="METHYLGLYOXAL_SYNTH"/>
    <property type="match status" value="1"/>
</dbReference>
<dbReference type="PROSITE" id="PS51855">
    <property type="entry name" value="MGS"/>
    <property type="match status" value="1"/>
</dbReference>
<name>MGSA_ECO57</name>
<evidence type="ECO:0000255" key="1">
    <source>
        <dbReference type="HAMAP-Rule" id="MF_00549"/>
    </source>
</evidence>
<evidence type="ECO:0000305" key="2"/>
<keyword id="KW-0456">Lyase</keyword>
<keyword id="KW-1185">Reference proteome</keyword>
<gene>
    <name evidence="1" type="primary">mgsA</name>
    <name type="ordered locus">Z1314</name>
    <name type="ordered locus">ECs1047</name>
</gene>
<sequence length="152" mass="16919">MELTTRTLPARKHIALVAHDHCKQMLMSWVERHQPLLEQHVLYATGTTGNLISRATGMNVNAMLSGPMGGDQQVGALISEGKIDVLIFFWDPLNAVPHDPDVKALLRLATVWNIPVATNVATADFIIQSPHFNDAVDILIPDYQRYLADRLK</sequence>
<reference key="1">
    <citation type="journal article" date="2001" name="Nature">
        <title>Genome sequence of enterohaemorrhagic Escherichia coli O157:H7.</title>
        <authorList>
            <person name="Perna N.T."/>
            <person name="Plunkett G. III"/>
            <person name="Burland V."/>
            <person name="Mau B."/>
            <person name="Glasner J.D."/>
            <person name="Rose D.J."/>
            <person name="Mayhew G.F."/>
            <person name="Evans P.S."/>
            <person name="Gregor J."/>
            <person name="Kirkpatrick H.A."/>
            <person name="Posfai G."/>
            <person name="Hackett J."/>
            <person name="Klink S."/>
            <person name="Boutin A."/>
            <person name="Shao Y."/>
            <person name="Miller L."/>
            <person name="Grotbeck E.J."/>
            <person name="Davis N.W."/>
            <person name="Lim A."/>
            <person name="Dimalanta E.T."/>
            <person name="Potamousis K."/>
            <person name="Apodaca J."/>
            <person name="Anantharaman T.S."/>
            <person name="Lin J."/>
            <person name="Yen G."/>
            <person name="Schwartz D.C."/>
            <person name="Welch R.A."/>
            <person name="Blattner F.R."/>
        </authorList>
    </citation>
    <scope>NUCLEOTIDE SEQUENCE [LARGE SCALE GENOMIC DNA]</scope>
    <source>
        <strain>O157:H7 / EDL933 / ATCC 700927 / EHEC</strain>
    </source>
</reference>
<reference key="2">
    <citation type="journal article" date="2001" name="DNA Res.">
        <title>Complete genome sequence of enterohemorrhagic Escherichia coli O157:H7 and genomic comparison with a laboratory strain K-12.</title>
        <authorList>
            <person name="Hayashi T."/>
            <person name="Makino K."/>
            <person name="Ohnishi M."/>
            <person name="Kurokawa K."/>
            <person name="Ishii K."/>
            <person name="Yokoyama K."/>
            <person name="Han C.-G."/>
            <person name="Ohtsubo E."/>
            <person name="Nakayama K."/>
            <person name="Murata T."/>
            <person name="Tanaka M."/>
            <person name="Tobe T."/>
            <person name="Iida T."/>
            <person name="Takami H."/>
            <person name="Honda T."/>
            <person name="Sasakawa C."/>
            <person name="Ogasawara N."/>
            <person name="Yasunaga T."/>
            <person name="Kuhara S."/>
            <person name="Shiba T."/>
            <person name="Hattori M."/>
            <person name="Shinagawa H."/>
        </authorList>
    </citation>
    <scope>NUCLEOTIDE SEQUENCE [LARGE SCALE GENOMIC DNA]</scope>
    <source>
        <strain>O157:H7 / Sakai / RIMD 0509952 / EHEC</strain>
    </source>
</reference>
<feature type="chain" id="PRO_0000178626" description="Methylglyoxal synthase">
    <location>
        <begin position="1"/>
        <end position="152"/>
    </location>
</feature>
<feature type="domain" description="MGS-like" evidence="1">
    <location>
        <begin position="6"/>
        <end position="152"/>
    </location>
</feature>
<feature type="active site" description="Proton donor/acceptor" evidence="1">
    <location>
        <position position="71"/>
    </location>
</feature>
<feature type="binding site" evidence="1">
    <location>
        <position position="19"/>
    </location>
    <ligand>
        <name>substrate</name>
    </ligand>
</feature>
<feature type="binding site" evidence="1">
    <location>
        <position position="23"/>
    </location>
    <ligand>
        <name>substrate</name>
    </ligand>
</feature>
<feature type="binding site" evidence="1">
    <location>
        <begin position="45"/>
        <end position="48"/>
    </location>
    <ligand>
        <name>substrate</name>
    </ligand>
</feature>
<feature type="binding site" evidence="1">
    <location>
        <begin position="65"/>
        <end position="66"/>
    </location>
    <ligand>
        <name>substrate</name>
    </ligand>
</feature>
<feature type="binding site" evidence="1">
    <location>
        <position position="98"/>
    </location>
    <ligand>
        <name>substrate</name>
    </ligand>
</feature>